<comment type="catalytic activity">
    <reaction evidence="1">
        <text>thymidine + phosphate = 2-deoxy-alpha-D-ribose 1-phosphate + thymine</text>
        <dbReference type="Rhea" id="RHEA:16037"/>
        <dbReference type="ChEBI" id="CHEBI:17748"/>
        <dbReference type="ChEBI" id="CHEBI:17821"/>
        <dbReference type="ChEBI" id="CHEBI:43474"/>
        <dbReference type="ChEBI" id="CHEBI:57259"/>
        <dbReference type="EC" id="2.4.2.4"/>
    </reaction>
</comment>
<comment type="similarity">
    <text evidence="1">Belongs to the thymidine/pyrimidine-nucleoside phosphorylase family. Type 2 subfamily.</text>
</comment>
<feature type="chain" id="PRO_0000314708" description="Putative thymidine phosphorylase 1">
    <location>
        <begin position="1"/>
        <end position="520"/>
    </location>
</feature>
<proteinExistence type="inferred from homology"/>
<dbReference type="EC" id="2.4.2.4" evidence="1"/>
<dbReference type="EMBL" id="AM260479">
    <property type="protein sequence ID" value="CAJ93112.1"/>
    <property type="molecule type" value="Genomic_DNA"/>
</dbReference>
<dbReference type="SMR" id="Q0KA59"/>
<dbReference type="STRING" id="381666.H16_A2012"/>
<dbReference type="KEGG" id="reh:H16_A2012"/>
<dbReference type="eggNOG" id="COG0213">
    <property type="taxonomic scope" value="Bacteria"/>
</dbReference>
<dbReference type="HOGENOM" id="CLU_025040_6_0_4"/>
<dbReference type="Proteomes" id="UP000008210">
    <property type="component" value="Chromosome 1"/>
</dbReference>
<dbReference type="GO" id="GO:0005829">
    <property type="term" value="C:cytosol"/>
    <property type="evidence" value="ECO:0007669"/>
    <property type="project" value="TreeGrafter"/>
</dbReference>
<dbReference type="GO" id="GO:0004645">
    <property type="term" value="F:1,4-alpha-oligoglucan phosphorylase activity"/>
    <property type="evidence" value="ECO:0007669"/>
    <property type="project" value="InterPro"/>
</dbReference>
<dbReference type="GO" id="GO:0009032">
    <property type="term" value="F:thymidine phosphorylase activity"/>
    <property type="evidence" value="ECO:0007669"/>
    <property type="project" value="UniProtKB-UniRule"/>
</dbReference>
<dbReference type="GO" id="GO:0006206">
    <property type="term" value="P:pyrimidine nucleobase metabolic process"/>
    <property type="evidence" value="ECO:0007669"/>
    <property type="project" value="InterPro"/>
</dbReference>
<dbReference type="GO" id="GO:0006213">
    <property type="term" value="P:pyrimidine nucleoside metabolic process"/>
    <property type="evidence" value="ECO:0007669"/>
    <property type="project" value="InterPro"/>
</dbReference>
<dbReference type="Gene3D" id="1.20.970.50">
    <property type="match status" value="1"/>
</dbReference>
<dbReference type="Gene3D" id="3.40.1030.10">
    <property type="entry name" value="Nucleoside phosphorylase/phosphoribosyltransferase catalytic domain"/>
    <property type="match status" value="1"/>
</dbReference>
<dbReference type="Gene3D" id="3.90.1170.30">
    <property type="entry name" value="Pyrimidine nucleoside phosphorylase-like, C-terminal domain"/>
    <property type="match status" value="1"/>
</dbReference>
<dbReference type="HAMAP" id="MF_00703">
    <property type="entry name" value="Thymid_phosp_2"/>
    <property type="match status" value="1"/>
</dbReference>
<dbReference type="InterPro" id="IPR000312">
    <property type="entry name" value="Glycosyl_Trfase_fam3"/>
</dbReference>
<dbReference type="InterPro" id="IPR017459">
    <property type="entry name" value="Glycosyl_Trfase_fam3_N_dom"/>
</dbReference>
<dbReference type="InterPro" id="IPR036320">
    <property type="entry name" value="Glycosyl_Trfase_fam3_N_dom_sf"/>
</dbReference>
<dbReference type="InterPro" id="IPR035902">
    <property type="entry name" value="Nuc_phospho_transferase"/>
</dbReference>
<dbReference type="InterPro" id="IPR036566">
    <property type="entry name" value="PYNP-like_C_sf"/>
</dbReference>
<dbReference type="InterPro" id="IPR013102">
    <property type="entry name" value="PYNP_C"/>
</dbReference>
<dbReference type="InterPro" id="IPR017872">
    <property type="entry name" value="Pyrmidine_PPase_CS"/>
</dbReference>
<dbReference type="InterPro" id="IPR028579">
    <property type="entry name" value="Thym_Pase_Put"/>
</dbReference>
<dbReference type="InterPro" id="IPR013466">
    <property type="entry name" value="Thymidine/AMP_Pase"/>
</dbReference>
<dbReference type="InterPro" id="IPR000053">
    <property type="entry name" value="Thymidine/pyrmidine_PPase"/>
</dbReference>
<dbReference type="NCBIfam" id="TIGR02645">
    <property type="entry name" value="ARCH_P_rylase"/>
    <property type="match status" value="1"/>
</dbReference>
<dbReference type="NCBIfam" id="NF003338">
    <property type="entry name" value="PRK04350.1"/>
    <property type="match status" value="1"/>
</dbReference>
<dbReference type="PANTHER" id="PTHR10515">
    <property type="entry name" value="THYMIDINE PHOSPHORYLASE"/>
    <property type="match status" value="1"/>
</dbReference>
<dbReference type="PANTHER" id="PTHR10515:SF0">
    <property type="entry name" value="THYMIDINE PHOSPHORYLASE"/>
    <property type="match status" value="1"/>
</dbReference>
<dbReference type="Pfam" id="PF02885">
    <property type="entry name" value="Glycos_trans_3N"/>
    <property type="match status" value="1"/>
</dbReference>
<dbReference type="Pfam" id="PF00591">
    <property type="entry name" value="Glycos_transf_3"/>
    <property type="match status" value="1"/>
</dbReference>
<dbReference type="Pfam" id="PF07831">
    <property type="entry name" value="PYNP_C"/>
    <property type="match status" value="1"/>
</dbReference>
<dbReference type="SMART" id="SM00941">
    <property type="entry name" value="PYNP_C"/>
    <property type="match status" value="1"/>
</dbReference>
<dbReference type="SUPFAM" id="SSF52418">
    <property type="entry name" value="Nucleoside phosphorylase/phosphoribosyltransferase catalytic domain"/>
    <property type="match status" value="1"/>
</dbReference>
<dbReference type="SUPFAM" id="SSF47648">
    <property type="entry name" value="Nucleoside phosphorylase/phosphoribosyltransferase N-terminal domain"/>
    <property type="match status" value="1"/>
</dbReference>
<dbReference type="SUPFAM" id="SSF54680">
    <property type="entry name" value="Pyrimidine nucleoside phosphorylase C-terminal domain"/>
    <property type="match status" value="1"/>
</dbReference>
<dbReference type="PROSITE" id="PS00647">
    <property type="entry name" value="THYMID_PHOSPHORYLASE"/>
    <property type="match status" value="1"/>
</dbReference>
<reference key="1">
    <citation type="journal article" date="2006" name="Nat. Biotechnol.">
        <title>Genome sequence of the bioplastic-producing 'Knallgas' bacterium Ralstonia eutropha H16.</title>
        <authorList>
            <person name="Pohlmann A."/>
            <person name="Fricke W.F."/>
            <person name="Reinecke F."/>
            <person name="Kusian B."/>
            <person name="Liesegang H."/>
            <person name="Cramm R."/>
            <person name="Eitinger T."/>
            <person name="Ewering C."/>
            <person name="Poetter M."/>
            <person name="Schwartz E."/>
            <person name="Strittmatter A."/>
            <person name="Voss I."/>
            <person name="Gottschalk G."/>
            <person name="Steinbuechel A."/>
            <person name="Friedrich B."/>
            <person name="Bowien B."/>
        </authorList>
    </citation>
    <scope>NUCLEOTIDE SEQUENCE [LARGE SCALE GENOMIC DNA]</scope>
    <source>
        <strain>ATCC 17699 / DSM 428 / KCTC 22496 / NCIMB 10442 / H16 / Stanier 337</strain>
    </source>
</reference>
<accession>Q0KA59</accession>
<sequence length="520" mass="54581">MNDASSDPGIPGRPGDVVAAAAPREVGALVFRPLEIDTWQEHVIYMHPDCPVCRAEGFSAQARVRVQIGDRSLIATLTLLGAPLLNTGEASLSLSAARTLSARAGDVVHVTHAPALESVRALRAKIYGCHLDSVQLDGIIGDISAGRYADVHIAAFLTACADGRMSLRETVDLTRAMVRSGQRLNWDREVVADKHCVGGLPGNRTTPVVVAIAAAAGLLLPKTSSRAITSPAGTADTMEALTRVTLDSTELRRVVEQVGAALVWGGALSLSPADDVLIRVERALDIDSDAQLVASILSKKIAAGSTHVLIDVPVGPTAKIREDSDLARLDLAMTKVADAFGLKLRILRTDGSQPVGRGVGPALEALDVLAVLQCQPTAPADLRERSLLLAGELLEFCGAIPPGQGRLLAGSLLDSGAAWARFQAICEAQGGLRTPGQAVFRRDVVAARSGIVTSVDNRHVARTAKLAGAPRRQVAGLELHVRAGDEVVAGAPLCTLHAQASGELEYAFSYALAHDPFRIE</sequence>
<name>TYPH1_CUPNH</name>
<keyword id="KW-0328">Glycosyltransferase</keyword>
<keyword id="KW-1185">Reference proteome</keyword>
<keyword id="KW-0808">Transferase</keyword>
<protein>
    <recommendedName>
        <fullName evidence="1">Putative thymidine phosphorylase 1</fullName>
        <ecNumber evidence="1">2.4.2.4</ecNumber>
    </recommendedName>
    <alternativeName>
        <fullName evidence="1">TdRPase 1</fullName>
    </alternativeName>
</protein>
<evidence type="ECO:0000255" key="1">
    <source>
        <dbReference type="HAMAP-Rule" id="MF_00703"/>
    </source>
</evidence>
<gene>
    <name type="ordered locus">H16_A2012</name>
</gene>
<organism>
    <name type="scientific">Cupriavidus necator (strain ATCC 17699 / DSM 428 / KCTC 22496 / NCIMB 10442 / H16 / Stanier 337)</name>
    <name type="common">Ralstonia eutropha</name>
    <dbReference type="NCBI Taxonomy" id="381666"/>
    <lineage>
        <taxon>Bacteria</taxon>
        <taxon>Pseudomonadati</taxon>
        <taxon>Pseudomonadota</taxon>
        <taxon>Betaproteobacteria</taxon>
        <taxon>Burkholderiales</taxon>
        <taxon>Burkholderiaceae</taxon>
        <taxon>Cupriavidus</taxon>
    </lineage>
</organism>